<protein>
    <recommendedName>
        <fullName evidence="1">Serine--tRNA ligase</fullName>
        <ecNumber evidence="1">6.1.1.11</ecNumber>
    </recommendedName>
    <alternativeName>
        <fullName evidence="1">Seryl-tRNA synthetase</fullName>
        <shortName evidence="1">SerRS</shortName>
    </alternativeName>
    <alternativeName>
        <fullName evidence="1">Seryl-tRNA(Ser/Sec) synthetase</fullName>
    </alternativeName>
</protein>
<dbReference type="EC" id="6.1.1.11" evidence="1"/>
<dbReference type="EMBL" id="CP000560">
    <property type="protein sequence ID" value="ABS72461.1"/>
    <property type="molecule type" value="Genomic_DNA"/>
</dbReference>
<dbReference type="RefSeq" id="WP_007408744.1">
    <property type="nucleotide sequence ID" value="NC_009725.2"/>
</dbReference>
<dbReference type="SMR" id="A7Z0D5"/>
<dbReference type="GeneID" id="93079154"/>
<dbReference type="KEGG" id="bay:RBAM_000160"/>
<dbReference type="HOGENOM" id="CLU_023797_0_1_9"/>
<dbReference type="UniPathway" id="UPA00906">
    <property type="reaction ID" value="UER00895"/>
</dbReference>
<dbReference type="Proteomes" id="UP000001120">
    <property type="component" value="Chromosome"/>
</dbReference>
<dbReference type="GO" id="GO:0005737">
    <property type="term" value="C:cytoplasm"/>
    <property type="evidence" value="ECO:0007669"/>
    <property type="project" value="UniProtKB-SubCell"/>
</dbReference>
<dbReference type="GO" id="GO:0005524">
    <property type="term" value="F:ATP binding"/>
    <property type="evidence" value="ECO:0007669"/>
    <property type="project" value="UniProtKB-UniRule"/>
</dbReference>
<dbReference type="GO" id="GO:0140096">
    <property type="term" value="F:catalytic activity, acting on a protein"/>
    <property type="evidence" value="ECO:0007669"/>
    <property type="project" value="UniProtKB-ARBA"/>
</dbReference>
<dbReference type="GO" id="GO:0004828">
    <property type="term" value="F:serine-tRNA ligase activity"/>
    <property type="evidence" value="ECO:0007669"/>
    <property type="project" value="UniProtKB-UniRule"/>
</dbReference>
<dbReference type="GO" id="GO:0016740">
    <property type="term" value="F:transferase activity"/>
    <property type="evidence" value="ECO:0007669"/>
    <property type="project" value="UniProtKB-ARBA"/>
</dbReference>
<dbReference type="GO" id="GO:0016260">
    <property type="term" value="P:selenocysteine biosynthetic process"/>
    <property type="evidence" value="ECO:0007669"/>
    <property type="project" value="UniProtKB-UniRule"/>
</dbReference>
<dbReference type="GO" id="GO:0006434">
    <property type="term" value="P:seryl-tRNA aminoacylation"/>
    <property type="evidence" value="ECO:0007669"/>
    <property type="project" value="UniProtKB-UniRule"/>
</dbReference>
<dbReference type="CDD" id="cd00770">
    <property type="entry name" value="SerRS_core"/>
    <property type="match status" value="1"/>
</dbReference>
<dbReference type="Gene3D" id="3.30.930.10">
    <property type="entry name" value="Bira Bifunctional Protein, Domain 2"/>
    <property type="match status" value="1"/>
</dbReference>
<dbReference type="Gene3D" id="1.10.287.40">
    <property type="entry name" value="Serine-tRNA synthetase, tRNA binding domain"/>
    <property type="match status" value="1"/>
</dbReference>
<dbReference type="HAMAP" id="MF_00176">
    <property type="entry name" value="Ser_tRNA_synth_type1"/>
    <property type="match status" value="1"/>
</dbReference>
<dbReference type="InterPro" id="IPR002314">
    <property type="entry name" value="aa-tRNA-synt_IIb"/>
</dbReference>
<dbReference type="InterPro" id="IPR006195">
    <property type="entry name" value="aa-tRNA-synth_II"/>
</dbReference>
<dbReference type="InterPro" id="IPR045864">
    <property type="entry name" value="aa-tRNA-synth_II/BPL/LPL"/>
</dbReference>
<dbReference type="InterPro" id="IPR002317">
    <property type="entry name" value="Ser-tRNA-ligase_type_1"/>
</dbReference>
<dbReference type="InterPro" id="IPR015866">
    <property type="entry name" value="Ser-tRNA-synth_1_N"/>
</dbReference>
<dbReference type="InterPro" id="IPR042103">
    <property type="entry name" value="SerRS_1_N_sf"/>
</dbReference>
<dbReference type="InterPro" id="IPR033729">
    <property type="entry name" value="SerRS_core"/>
</dbReference>
<dbReference type="InterPro" id="IPR010978">
    <property type="entry name" value="tRNA-bd_arm"/>
</dbReference>
<dbReference type="NCBIfam" id="TIGR00414">
    <property type="entry name" value="serS"/>
    <property type="match status" value="1"/>
</dbReference>
<dbReference type="PANTHER" id="PTHR43697:SF1">
    <property type="entry name" value="SERINE--TRNA LIGASE"/>
    <property type="match status" value="1"/>
</dbReference>
<dbReference type="PANTHER" id="PTHR43697">
    <property type="entry name" value="SERYL-TRNA SYNTHETASE"/>
    <property type="match status" value="1"/>
</dbReference>
<dbReference type="Pfam" id="PF02403">
    <property type="entry name" value="Seryl_tRNA_N"/>
    <property type="match status" value="1"/>
</dbReference>
<dbReference type="Pfam" id="PF00587">
    <property type="entry name" value="tRNA-synt_2b"/>
    <property type="match status" value="1"/>
</dbReference>
<dbReference type="PIRSF" id="PIRSF001529">
    <property type="entry name" value="Ser-tRNA-synth_IIa"/>
    <property type="match status" value="1"/>
</dbReference>
<dbReference type="PRINTS" id="PR00981">
    <property type="entry name" value="TRNASYNTHSER"/>
</dbReference>
<dbReference type="SUPFAM" id="SSF55681">
    <property type="entry name" value="Class II aaRS and biotin synthetases"/>
    <property type="match status" value="1"/>
</dbReference>
<dbReference type="SUPFAM" id="SSF46589">
    <property type="entry name" value="tRNA-binding arm"/>
    <property type="match status" value="1"/>
</dbReference>
<dbReference type="PROSITE" id="PS50862">
    <property type="entry name" value="AA_TRNA_LIGASE_II"/>
    <property type="match status" value="1"/>
</dbReference>
<accession>A7Z0D5</accession>
<gene>
    <name evidence="1" type="primary">serS</name>
    <name type="ordered locus">RBAM_000160</name>
</gene>
<organism>
    <name type="scientific">Bacillus velezensis (strain DSM 23117 / BGSC 10A6 / LMG 26770 / FZB42)</name>
    <name type="common">Bacillus amyloliquefaciens subsp. plantarum</name>
    <dbReference type="NCBI Taxonomy" id="326423"/>
    <lineage>
        <taxon>Bacteria</taxon>
        <taxon>Bacillati</taxon>
        <taxon>Bacillota</taxon>
        <taxon>Bacilli</taxon>
        <taxon>Bacillales</taxon>
        <taxon>Bacillaceae</taxon>
        <taxon>Bacillus</taxon>
        <taxon>Bacillus amyloliquefaciens group</taxon>
    </lineage>
</organism>
<name>SYS_BACVZ</name>
<sequence length="425" mass="48894">MIDTKVLRANFQEVKAKLIPKGEDLSDFDKFEELDEKRRELIGKVEELKGKRNEVSQQVAVLKREKKDADHIIKEMREVGEEIKKLDEELRTVETTLETILLSIPNIPHDSVPVGETEDDNIEIRKWGEAPAFSYEPKPHWDIADHLNILDFERASKVTGSRFVFYKGLGARLERALYNFMLDLHVDEYDYTEVIPPYMVNRTSMTGTGQLPKFEEDAFKIREEDYFLIPTAEVPITNMHRDEILSGENLPINYAAFSACFRSEAGSAGRDTRGLIRQHQFNKVELVKFVKPEDSYEELEKLTNQAERVLQLLELPYRVMSMCTGDLGFTAAKKYDIEVWIPSQDTYREISSCSNFEAFQARRANIRFRREAKGKPEHVHTLNGSGLAVGRTVAAILENYQQEDGSVIIPKVLRPYMGNKEVIKP</sequence>
<reference key="1">
    <citation type="journal article" date="2007" name="Nat. Biotechnol.">
        <title>Comparative analysis of the complete genome sequence of the plant growth-promoting bacterium Bacillus amyloliquefaciens FZB42.</title>
        <authorList>
            <person name="Chen X.H."/>
            <person name="Koumoutsi A."/>
            <person name="Scholz R."/>
            <person name="Eisenreich A."/>
            <person name="Schneider K."/>
            <person name="Heinemeyer I."/>
            <person name="Morgenstern B."/>
            <person name="Voss B."/>
            <person name="Hess W.R."/>
            <person name="Reva O."/>
            <person name="Junge H."/>
            <person name="Voigt B."/>
            <person name="Jungblut P.R."/>
            <person name="Vater J."/>
            <person name="Suessmuth R."/>
            <person name="Liesegang H."/>
            <person name="Strittmatter A."/>
            <person name="Gottschalk G."/>
            <person name="Borriss R."/>
        </authorList>
    </citation>
    <scope>NUCLEOTIDE SEQUENCE [LARGE SCALE GENOMIC DNA]</scope>
    <source>
        <strain>DSM 23117 / BGSC 10A6 / LMG 26770 / FZB42</strain>
    </source>
</reference>
<comment type="function">
    <text evidence="1">Catalyzes the attachment of serine to tRNA(Ser). Is also able to aminoacylate tRNA(Sec) with serine, to form the misacylated tRNA L-seryl-tRNA(Sec), which will be further converted into selenocysteinyl-tRNA(Sec).</text>
</comment>
<comment type="catalytic activity">
    <reaction evidence="1">
        <text>tRNA(Ser) + L-serine + ATP = L-seryl-tRNA(Ser) + AMP + diphosphate + H(+)</text>
        <dbReference type="Rhea" id="RHEA:12292"/>
        <dbReference type="Rhea" id="RHEA-COMP:9669"/>
        <dbReference type="Rhea" id="RHEA-COMP:9703"/>
        <dbReference type="ChEBI" id="CHEBI:15378"/>
        <dbReference type="ChEBI" id="CHEBI:30616"/>
        <dbReference type="ChEBI" id="CHEBI:33019"/>
        <dbReference type="ChEBI" id="CHEBI:33384"/>
        <dbReference type="ChEBI" id="CHEBI:78442"/>
        <dbReference type="ChEBI" id="CHEBI:78533"/>
        <dbReference type="ChEBI" id="CHEBI:456215"/>
        <dbReference type="EC" id="6.1.1.11"/>
    </reaction>
</comment>
<comment type="catalytic activity">
    <reaction evidence="1">
        <text>tRNA(Sec) + L-serine + ATP = L-seryl-tRNA(Sec) + AMP + diphosphate + H(+)</text>
        <dbReference type="Rhea" id="RHEA:42580"/>
        <dbReference type="Rhea" id="RHEA-COMP:9742"/>
        <dbReference type="Rhea" id="RHEA-COMP:10128"/>
        <dbReference type="ChEBI" id="CHEBI:15378"/>
        <dbReference type="ChEBI" id="CHEBI:30616"/>
        <dbReference type="ChEBI" id="CHEBI:33019"/>
        <dbReference type="ChEBI" id="CHEBI:33384"/>
        <dbReference type="ChEBI" id="CHEBI:78442"/>
        <dbReference type="ChEBI" id="CHEBI:78533"/>
        <dbReference type="ChEBI" id="CHEBI:456215"/>
        <dbReference type="EC" id="6.1.1.11"/>
    </reaction>
</comment>
<comment type="pathway">
    <text evidence="1">Aminoacyl-tRNA biosynthesis; selenocysteinyl-tRNA(Sec) biosynthesis; L-seryl-tRNA(Sec) from L-serine and tRNA(Sec): step 1/1.</text>
</comment>
<comment type="subunit">
    <text evidence="1">Homodimer. The tRNA molecule binds across the dimer.</text>
</comment>
<comment type="subcellular location">
    <subcellularLocation>
        <location evidence="1">Cytoplasm</location>
    </subcellularLocation>
</comment>
<comment type="domain">
    <text evidence="1">Consists of two distinct domains, a catalytic core and a N-terminal extension that is involved in tRNA binding.</text>
</comment>
<comment type="similarity">
    <text evidence="1">Belongs to the class-II aminoacyl-tRNA synthetase family. Type-1 seryl-tRNA synthetase subfamily.</text>
</comment>
<evidence type="ECO:0000255" key="1">
    <source>
        <dbReference type="HAMAP-Rule" id="MF_00176"/>
    </source>
</evidence>
<keyword id="KW-0030">Aminoacyl-tRNA synthetase</keyword>
<keyword id="KW-0067">ATP-binding</keyword>
<keyword id="KW-0963">Cytoplasm</keyword>
<keyword id="KW-0436">Ligase</keyword>
<keyword id="KW-0547">Nucleotide-binding</keyword>
<keyword id="KW-0648">Protein biosynthesis</keyword>
<feature type="chain" id="PRO_1000019615" description="Serine--tRNA ligase">
    <location>
        <begin position="1"/>
        <end position="425"/>
    </location>
</feature>
<feature type="binding site" evidence="1">
    <location>
        <begin position="231"/>
        <end position="233"/>
    </location>
    <ligand>
        <name>L-serine</name>
        <dbReference type="ChEBI" id="CHEBI:33384"/>
    </ligand>
</feature>
<feature type="binding site" evidence="1">
    <location>
        <begin position="262"/>
        <end position="264"/>
    </location>
    <ligand>
        <name>ATP</name>
        <dbReference type="ChEBI" id="CHEBI:30616"/>
    </ligand>
</feature>
<feature type="binding site" evidence="1">
    <location>
        <position position="285"/>
    </location>
    <ligand>
        <name>L-serine</name>
        <dbReference type="ChEBI" id="CHEBI:33384"/>
    </ligand>
</feature>
<feature type="binding site" evidence="1">
    <location>
        <begin position="349"/>
        <end position="352"/>
    </location>
    <ligand>
        <name>ATP</name>
        <dbReference type="ChEBI" id="CHEBI:30616"/>
    </ligand>
</feature>
<feature type="binding site" evidence="1">
    <location>
        <position position="385"/>
    </location>
    <ligand>
        <name>L-serine</name>
        <dbReference type="ChEBI" id="CHEBI:33384"/>
    </ligand>
</feature>
<proteinExistence type="inferred from homology"/>